<accession>C3P9R3</accession>
<organism>
    <name type="scientific">Bacillus anthracis (strain A0248)</name>
    <dbReference type="NCBI Taxonomy" id="592021"/>
    <lineage>
        <taxon>Bacteria</taxon>
        <taxon>Bacillati</taxon>
        <taxon>Bacillota</taxon>
        <taxon>Bacilli</taxon>
        <taxon>Bacillales</taxon>
        <taxon>Bacillaceae</taxon>
        <taxon>Bacillus</taxon>
        <taxon>Bacillus cereus group</taxon>
    </lineage>
</organism>
<reference key="1">
    <citation type="submission" date="2009-04" db="EMBL/GenBank/DDBJ databases">
        <title>Genome sequence of Bacillus anthracis A0248.</title>
        <authorList>
            <person name="Dodson R.J."/>
            <person name="Munk A.C."/>
            <person name="Bruce D."/>
            <person name="Detter C."/>
            <person name="Tapia R."/>
            <person name="Sutton G."/>
            <person name="Sims D."/>
            <person name="Brettin T."/>
        </authorList>
    </citation>
    <scope>NUCLEOTIDE SEQUENCE [LARGE SCALE GENOMIC DNA]</scope>
    <source>
        <strain>A0248</strain>
    </source>
</reference>
<feature type="chain" id="PRO_1000193994" description="Large ribosomal subunit protein uL29">
    <location>
        <begin position="1"/>
        <end position="66"/>
    </location>
</feature>
<protein>
    <recommendedName>
        <fullName evidence="1">Large ribosomal subunit protein uL29</fullName>
    </recommendedName>
    <alternativeName>
        <fullName evidence="2">50S ribosomal protein L29</fullName>
    </alternativeName>
</protein>
<comment type="similarity">
    <text evidence="1">Belongs to the universal ribosomal protein uL29 family.</text>
</comment>
<proteinExistence type="inferred from homology"/>
<evidence type="ECO:0000255" key="1">
    <source>
        <dbReference type="HAMAP-Rule" id="MF_00374"/>
    </source>
</evidence>
<evidence type="ECO:0000305" key="2"/>
<name>RL29_BACAA</name>
<keyword id="KW-0687">Ribonucleoprotein</keyword>
<keyword id="KW-0689">Ribosomal protein</keyword>
<dbReference type="EMBL" id="CP001598">
    <property type="protein sequence ID" value="ACQ47518.1"/>
    <property type="molecule type" value="Genomic_DNA"/>
</dbReference>
<dbReference type="RefSeq" id="WP_000855718.1">
    <property type="nucleotide sequence ID" value="NC_012659.1"/>
</dbReference>
<dbReference type="SMR" id="C3P9R3"/>
<dbReference type="GeneID" id="93010935"/>
<dbReference type="KEGG" id="bai:BAA_0134"/>
<dbReference type="HOGENOM" id="CLU_158491_5_2_9"/>
<dbReference type="GO" id="GO:0022625">
    <property type="term" value="C:cytosolic large ribosomal subunit"/>
    <property type="evidence" value="ECO:0007669"/>
    <property type="project" value="TreeGrafter"/>
</dbReference>
<dbReference type="GO" id="GO:0003735">
    <property type="term" value="F:structural constituent of ribosome"/>
    <property type="evidence" value="ECO:0007669"/>
    <property type="project" value="InterPro"/>
</dbReference>
<dbReference type="GO" id="GO:0006412">
    <property type="term" value="P:translation"/>
    <property type="evidence" value="ECO:0007669"/>
    <property type="project" value="UniProtKB-UniRule"/>
</dbReference>
<dbReference type="CDD" id="cd00427">
    <property type="entry name" value="Ribosomal_L29_HIP"/>
    <property type="match status" value="1"/>
</dbReference>
<dbReference type="FunFam" id="1.10.287.310:FF:000001">
    <property type="entry name" value="50S ribosomal protein L29"/>
    <property type="match status" value="1"/>
</dbReference>
<dbReference type="Gene3D" id="1.10.287.310">
    <property type="match status" value="1"/>
</dbReference>
<dbReference type="HAMAP" id="MF_00374">
    <property type="entry name" value="Ribosomal_uL29"/>
    <property type="match status" value="1"/>
</dbReference>
<dbReference type="InterPro" id="IPR050063">
    <property type="entry name" value="Ribosomal_protein_uL29"/>
</dbReference>
<dbReference type="InterPro" id="IPR001854">
    <property type="entry name" value="Ribosomal_uL29"/>
</dbReference>
<dbReference type="InterPro" id="IPR018254">
    <property type="entry name" value="Ribosomal_uL29_CS"/>
</dbReference>
<dbReference type="InterPro" id="IPR036049">
    <property type="entry name" value="Ribosomal_uL29_sf"/>
</dbReference>
<dbReference type="NCBIfam" id="TIGR00012">
    <property type="entry name" value="L29"/>
    <property type="match status" value="1"/>
</dbReference>
<dbReference type="PANTHER" id="PTHR10916">
    <property type="entry name" value="60S RIBOSOMAL PROTEIN L35/50S RIBOSOMAL PROTEIN L29"/>
    <property type="match status" value="1"/>
</dbReference>
<dbReference type="PANTHER" id="PTHR10916:SF0">
    <property type="entry name" value="LARGE RIBOSOMAL SUBUNIT PROTEIN UL29C"/>
    <property type="match status" value="1"/>
</dbReference>
<dbReference type="Pfam" id="PF00831">
    <property type="entry name" value="Ribosomal_L29"/>
    <property type="match status" value="1"/>
</dbReference>
<dbReference type="SUPFAM" id="SSF46561">
    <property type="entry name" value="Ribosomal protein L29 (L29p)"/>
    <property type="match status" value="1"/>
</dbReference>
<dbReference type="PROSITE" id="PS00579">
    <property type="entry name" value="RIBOSOMAL_L29"/>
    <property type="match status" value="1"/>
</dbReference>
<gene>
    <name evidence="1" type="primary">rpmC</name>
    <name type="ordered locus">BAA_0134</name>
</gene>
<sequence length="66" mass="7768">MKTNDIRELTTAEIETKVKALKEELFNLRFQLATGQLENPTRIREVRKAIARMKTVVREREIGINR</sequence>